<evidence type="ECO:0000255" key="1">
    <source>
        <dbReference type="HAMAP-Rule" id="MF_00259"/>
    </source>
</evidence>
<gene>
    <name evidence="1" type="primary">gcvT</name>
    <name type="ordered locus">PA5215</name>
</gene>
<organism>
    <name type="scientific">Pseudomonas aeruginosa (strain ATCC 15692 / DSM 22644 / CIP 104116 / JCM 14847 / LMG 12228 / 1C / PRS 101 / PAO1)</name>
    <dbReference type="NCBI Taxonomy" id="208964"/>
    <lineage>
        <taxon>Bacteria</taxon>
        <taxon>Pseudomonadati</taxon>
        <taxon>Pseudomonadota</taxon>
        <taxon>Gammaproteobacteria</taxon>
        <taxon>Pseudomonadales</taxon>
        <taxon>Pseudomonadaceae</taxon>
        <taxon>Pseudomonas</taxon>
    </lineage>
</organism>
<feature type="chain" id="PRO_0000122586" description="Aminomethyltransferase">
    <location>
        <begin position="1"/>
        <end position="360"/>
    </location>
</feature>
<name>GCST_PSEAE</name>
<sequence length="360" mass="38907">MGLRTPLYELHVALGAKMVDFGGWDMPLHYGSQVEEHHQVRRDCGVFDVSHMTVVDVAGEQATAYLQHLLANDVARLGETGKALYSAMLNEEGGVVDDLIVYLTEHGYRVVVNASTRDKDIAWMQAQAAGFKVDLQERGDLAMLAIQGPNARVHSSELVSPARAALIRELKPFQGRAEGDWFIARTGYTGEDGLEIMLPAAEAPGFLNELVGAGISPAGLGARDTLRLEAGLNLYGQDMDESVSPLAANMGWTVAWEPVARDFVGRRALEAQKAAGDQPKLVGLVLEERGVLRAHQVVRVAGIGEGEITSGSFSPTLNKSIALARVPAATGDRAEVEIRGKWYPVRVVQPSFVRHGKPLI</sequence>
<reference key="1">
    <citation type="journal article" date="2000" name="Nature">
        <title>Complete genome sequence of Pseudomonas aeruginosa PAO1, an opportunistic pathogen.</title>
        <authorList>
            <person name="Stover C.K."/>
            <person name="Pham X.-Q.T."/>
            <person name="Erwin A.L."/>
            <person name="Mizoguchi S.D."/>
            <person name="Warrener P."/>
            <person name="Hickey M.J."/>
            <person name="Brinkman F.S.L."/>
            <person name="Hufnagle W.O."/>
            <person name="Kowalik D.J."/>
            <person name="Lagrou M."/>
            <person name="Garber R.L."/>
            <person name="Goltry L."/>
            <person name="Tolentino E."/>
            <person name="Westbrock-Wadman S."/>
            <person name="Yuan Y."/>
            <person name="Brody L.L."/>
            <person name="Coulter S.N."/>
            <person name="Folger K.R."/>
            <person name="Kas A."/>
            <person name="Larbig K."/>
            <person name="Lim R.M."/>
            <person name="Smith K.A."/>
            <person name="Spencer D.H."/>
            <person name="Wong G.K.-S."/>
            <person name="Wu Z."/>
            <person name="Paulsen I.T."/>
            <person name="Reizer J."/>
            <person name="Saier M.H. Jr."/>
            <person name="Hancock R.E.W."/>
            <person name="Lory S."/>
            <person name="Olson M.V."/>
        </authorList>
    </citation>
    <scope>NUCLEOTIDE SEQUENCE [LARGE SCALE GENOMIC DNA]</scope>
    <source>
        <strain>ATCC 15692 / DSM 22644 / CIP 104116 / JCM 14847 / LMG 12228 / 1C / PRS 101 / PAO1</strain>
    </source>
</reference>
<proteinExistence type="inferred from homology"/>
<dbReference type="EC" id="2.1.2.10" evidence="1"/>
<dbReference type="EMBL" id="AE004091">
    <property type="protein sequence ID" value="AAG08600.1"/>
    <property type="molecule type" value="Genomic_DNA"/>
</dbReference>
<dbReference type="PIR" id="G82994">
    <property type="entry name" value="G82994"/>
</dbReference>
<dbReference type="RefSeq" id="WP_003114049.1">
    <property type="nucleotide sequence ID" value="NZ_QZGE01000002.1"/>
</dbReference>
<dbReference type="SMR" id="Q9HTX5"/>
<dbReference type="FunCoup" id="Q9HTX5">
    <property type="interactions" value="696"/>
</dbReference>
<dbReference type="STRING" id="208964.PA5215"/>
<dbReference type="PaxDb" id="208964-PA5215"/>
<dbReference type="DNASU" id="880638"/>
<dbReference type="KEGG" id="pae:PA5215"/>
<dbReference type="PATRIC" id="fig|208964.12.peg.5465"/>
<dbReference type="PseudoCAP" id="PA5215"/>
<dbReference type="HOGENOM" id="CLU_007884_10_2_6"/>
<dbReference type="InParanoid" id="Q9HTX5"/>
<dbReference type="OrthoDB" id="9774591at2"/>
<dbReference type="PhylomeDB" id="Q9HTX5"/>
<dbReference type="BioCyc" id="PAER208964:G1FZ6-5334-MONOMER"/>
<dbReference type="Proteomes" id="UP000002438">
    <property type="component" value="Chromosome"/>
</dbReference>
<dbReference type="GO" id="GO:0005829">
    <property type="term" value="C:cytosol"/>
    <property type="evidence" value="ECO:0000318"/>
    <property type="project" value="GO_Central"/>
</dbReference>
<dbReference type="GO" id="GO:0005960">
    <property type="term" value="C:glycine cleavage complex"/>
    <property type="evidence" value="ECO:0007669"/>
    <property type="project" value="InterPro"/>
</dbReference>
<dbReference type="GO" id="GO:0004047">
    <property type="term" value="F:aminomethyltransferase activity"/>
    <property type="evidence" value="ECO:0007669"/>
    <property type="project" value="UniProtKB-UniRule"/>
</dbReference>
<dbReference type="GO" id="GO:0008483">
    <property type="term" value="F:transaminase activity"/>
    <property type="evidence" value="ECO:0007669"/>
    <property type="project" value="UniProtKB-KW"/>
</dbReference>
<dbReference type="GO" id="GO:0019464">
    <property type="term" value="P:glycine decarboxylation via glycine cleavage system"/>
    <property type="evidence" value="ECO:0007669"/>
    <property type="project" value="UniProtKB-UniRule"/>
</dbReference>
<dbReference type="FunFam" id="2.40.30.110:FF:000001">
    <property type="entry name" value="Aminomethyltransferase"/>
    <property type="match status" value="1"/>
</dbReference>
<dbReference type="FunFam" id="3.30.70.1400:FF:000001">
    <property type="entry name" value="Aminomethyltransferase"/>
    <property type="match status" value="1"/>
</dbReference>
<dbReference type="FunFam" id="4.10.1250.10:FF:000001">
    <property type="entry name" value="Aminomethyltransferase"/>
    <property type="match status" value="1"/>
</dbReference>
<dbReference type="Gene3D" id="2.40.30.110">
    <property type="entry name" value="Aminomethyltransferase beta-barrel domains"/>
    <property type="match status" value="1"/>
</dbReference>
<dbReference type="Gene3D" id="3.30.70.1400">
    <property type="entry name" value="Aminomethyltransferase beta-barrel domains"/>
    <property type="match status" value="1"/>
</dbReference>
<dbReference type="Gene3D" id="4.10.1250.10">
    <property type="entry name" value="Aminomethyltransferase fragment"/>
    <property type="match status" value="1"/>
</dbReference>
<dbReference type="Gene3D" id="3.30.1360.120">
    <property type="entry name" value="Probable tRNA modification gtpase trme, domain 1"/>
    <property type="match status" value="1"/>
</dbReference>
<dbReference type="HAMAP" id="MF_00259">
    <property type="entry name" value="GcvT"/>
    <property type="match status" value="1"/>
</dbReference>
<dbReference type="InterPro" id="IPR006223">
    <property type="entry name" value="GCS_T"/>
</dbReference>
<dbReference type="InterPro" id="IPR022903">
    <property type="entry name" value="GCS_T_bac"/>
</dbReference>
<dbReference type="InterPro" id="IPR013977">
    <property type="entry name" value="GCST_C"/>
</dbReference>
<dbReference type="InterPro" id="IPR006222">
    <property type="entry name" value="GCV_T_N"/>
</dbReference>
<dbReference type="InterPro" id="IPR028896">
    <property type="entry name" value="GcvT/YgfZ/DmdA"/>
</dbReference>
<dbReference type="InterPro" id="IPR029043">
    <property type="entry name" value="GcvT/YgfZ_C"/>
</dbReference>
<dbReference type="InterPro" id="IPR027266">
    <property type="entry name" value="TrmE/GcvT_dom1"/>
</dbReference>
<dbReference type="NCBIfam" id="TIGR00528">
    <property type="entry name" value="gcvT"/>
    <property type="match status" value="1"/>
</dbReference>
<dbReference type="NCBIfam" id="NF001567">
    <property type="entry name" value="PRK00389.1"/>
    <property type="match status" value="1"/>
</dbReference>
<dbReference type="PANTHER" id="PTHR43757">
    <property type="entry name" value="AMINOMETHYLTRANSFERASE"/>
    <property type="match status" value="1"/>
</dbReference>
<dbReference type="PANTHER" id="PTHR43757:SF2">
    <property type="entry name" value="AMINOMETHYLTRANSFERASE, MITOCHONDRIAL"/>
    <property type="match status" value="1"/>
</dbReference>
<dbReference type="Pfam" id="PF01571">
    <property type="entry name" value="GCV_T"/>
    <property type="match status" value="1"/>
</dbReference>
<dbReference type="Pfam" id="PF08669">
    <property type="entry name" value="GCV_T_C"/>
    <property type="match status" value="1"/>
</dbReference>
<dbReference type="PIRSF" id="PIRSF006487">
    <property type="entry name" value="GcvT"/>
    <property type="match status" value="1"/>
</dbReference>
<dbReference type="SUPFAM" id="SSF101790">
    <property type="entry name" value="Aminomethyltransferase beta-barrel domain"/>
    <property type="match status" value="1"/>
</dbReference>
<dbReference type="SUPFAM" id="SSF103025">
    <property type="entry name" value="Folate-binding domain"/>
    <property type="match status" value="1"/>
</dbReference>
<keyword id="KW-0032">Aminotransferase</keyword>
<keyword id="KW-1185">Reference proteome</keyword>
<keyword id="KW-0808">Transferase</keyword>
<comment type="function">
    <text evidence="1">The glycine cleavage system catalyzes the degradation of glycine.</text>
</comment>
<comment type="catalytic activity">
    <reaction evidence="1">
        <text>N(6)-[(R)-S(8)-aminomethyldihydrolipoyl]-L-lysyl-[protein] + (6S)-5,6,7,8-tetrahydrofolate = N(6)-[(R)-dihydrolipoyl]-L-lysyl-[protein] + (6R)-5,10-methylene-5,6,7,8-tetrahydrofolate + NH4(+)</text>
        <dbReference type="Rhea" id="RHEA:16945"/>
        <dbReference type="Rhea" id="RHEA-COMP:10475"/>
        <dbReference type="Rhea" id="RHEA-COMP:10492"/>
        <dbReference type="ChEBI" id="CHEBI:15636"/>
        <dbReference type="ChEBI" id="CHEBI:28938"/>
        <dbReference type="ChEBI" id="CHEBI:57453"/>
        <dbReference type="ChEBI" id="CHEBI:83100"/>
        <dbReference type="ChEBI" id="CHEBI:83143"/>
        <dbReference type="EC" id="2.1.2.10"/>
    </reaction>
</comment>
<comment type="subunit">
    <text evidence="1">The glycine cleavage system is composed of four proteins: P, T, L and H.</text>
</comment>
<comment type="similarity">
    <text evidence="1">Belongs to the GcvT family.</text>
</comment>
<protein>
    <recommendedName>
        <fullName evidence="1">Aminomethyltransferase</fullName>
        <ecNumber evidence="1">2.1.2.10</ecNumber>
    </recommendedName>
    <alternativeName>
        <fullName evidence="1">Glycine cleavage system T protein</fullName>
    </alternativeName>
</protein>
<accession>Q9HTX5</accession>